<evidence type="ECO:0000255" key="1">
    <source>
        <dbReference type="HAMAP-Rule" id="MF_00340"/>
    </source>
</evidence>
<evidence type="ECO:0000256" key="2">
    <source>
        <dbReference type="SAM" id="MobiDB-lite"/>
    </source>
</evidence>
<evidence type="ECO:0000305" key="3"/>
<accession>A8L591</accession>
<sequence length="56" mass="6422">MAVPKRRTSRSNTRSRRAQWKAKAPALAKCSRGHTIRPHTMCPTCGRYNDRQVLDV</sequence>
<comment type="similarity">
    <text evidence="1">Belongs to the bacterial ribosomal protein bL32 family.</text>
</comment>
<feature type="chain" id="PRO_1000195977" description="Large ribosomal subunit protein bL32">
    <location>
        <begin position="1"/>
        <end position="56"/>
    </location>
</feature>
<feature type="region of interest" description="Disordered" evidence="2">
    <location>
        <begin position="1"/>
        <end position="26"/>
    </location>
</feature>
<feature type="compositionally biased region" description="Basic residues" evidence="2">
    <location>
        <begin position="1"/>
        <end position="20"/>
    </location>
</feature>
<dbReference type="EMBL" id="CP000820">
    <property type="protein sequence ID" value="ABW10591.1"/>
    <property type="molecule type" value="Genomic_DNA"/>
</dbReference>
<dbReference type="RefSeq" id="WP_020458770.1">
    <property type="nucleotide sequence ID" value="NC_009921.1"/>
</dbReference>
<dbReference type="SMR" id="A8L591"/>
<dbReference type="STRING" id="298653.Franean1_1137"/>
<dbReference type="KEGG" id="fre:Franean1_1137"/>
<dbReference type="eggNOG" id="COG0333">
    <property type="taxonomic scope" value="Bacteria"/>
</dbReference>
<dbReference type="HOGENOM" id="CLU_129084_1_1_11"/>
<dbReference type="GO" id="GO:0015934">
    <property type="term" value="C:large ribosomal subunit"/>
    <property type="evidence" value="ECO:0007669"/>
    <property type="project" value="InterPro"/>
</dbReference>
<dbReference type="GO" id="GO:0003735">
    <property type="term" value="F:structural constituent of ribosome"/>
    <property type="evidence" value="ECO:0007669"/>
    <property type="project" value="InterPro"/>
</dbReference>
<dbReference type="GO" id="GO:0006412">
    <property type="term" value="P:translation"/>
    <property type="evidence" value="ECO:0007669"/>
    <property type="project" value="UniProtKB-UniRule"/>
</dbReference>
<dbReference type="HAMAP" id="MF_00340">
    <property type="entry name" value="Ribosomal_bL32"/>
    <property type="match status" value="1"/>
</dbReference>
<dbReference type="InterPro" id="IPR002677">
    <property type="entry name" value="Ribosomal_bL32"/>
</dbReference>
<dbReference type="InterPro" id="IPR044957">
    <property type="entry name" value="Ribosomal_bL32_bact"/>
</dbReference>
<dbReference type="InterPro" id="IPR011332">
    <property type="entry name" value="Ribosomal_zn-bd"/>
</dbReference>
<dbReference type="NCBIfam" id="TIGR01031">
    <property type="entry name" value="rpmF_bact"/>
    <property type="match status" value="1"/>
</dbReference>
<dbReference type="PANTHER" id="PTHR35534">
    <property type="entry name" value="50S RIBOSOMAL PROTEIN L32"/>
    <property type="match status" value="1"/>
</dbReference>
<dbReference type="PANTHER" id="PTHR35534:SF1">
    <property type="entry name" value="LARGE RIBOSOMAL SUBUNIT PROTEIN BL32"/>
    <property type="match status" value="1"/>
</dbReference>
<dbReference type="Pfam" id="PF01783">
    <property type="entry name" value="Ribosomal_L32p"/>
    <property type="match status" value="1"/>
</dbReference>
<dbReference type="SUPFAM" id="SSF57829">
    <property type="entry name" value="Zn-binding ribosomal proteins"/>
    <property type="match status" value="1"/>
</dbReference>
<name>RL32_PARS2</name>
<reference key="1">
    <citation type="journal article" date="2007" name="Genome Res.">
        <title>Genome characteristics of facultatively symbiotic Frankia sp. strains reflect host range and host plant biogeography.</title>
        <authorList>
            <person name="Normand P."/>
            <person name="Lapierre P."/>
            <person name="Tisa L.S."/>
            <person name="Gogarten J.P."/>
            <person name="Alloisio N."/>
            <person name="Bagnarol E."/>
            <person name="Bassi C.A."/>
            <person name="Berry A.M."/>
            <person name="Bickhart D.M."/>
            <person name="Choisne N."/>
            <person name="Couloux A."/>
            <person name="Cournoyer B."/>
            <person name="Cruveiller S."/>
            <person name="Daubin V."/>
            <person name="Demange N."/>
            <person name="Francino M.P."/>
            <person name="Goltsman E."/>
            <person name="Huang Y."/>
            <person name="Kopp O.R."/>
            <person name="Labarre L."/>
            <person name="Lapidus A."/>
            <person name="Lavire C."/>
            <person name="Marechal J."/>
            <person name="Martinez M."/>
            <person name="Mastronunzio J.E."/>
            <person name="Mullin B.C."/>
            <person name="Niemann J."/>
            <person name="Pujic P."/>
            <person name="Rawnsley T."/>
            <person name="Rouy Z."/>
            <person name="Schenowitz C."/>
            <person name="Sellstedt A."/>
            <person name="Tavares F."/>
            <person name="Tomkins J.P."/>
            <person name="Vallenet D."/>
            <person name="Valverde C."/>
            <person name="Wall L.G."/>
            <person name="Wang Y."/>
            <person name="Medigue C."/>
            <person name="Benson D.R."/>
        </authorList>
    </citation>
    <scope>NUCLEOTIDE SEQUENCE [LARGE SCALE GENOMIC DNA]</scope>
    <source>
        <strain>EAN1pec</strain>
    </source>
</reference>
<proteinExistence type="inferred from homology"/>
<organism>
    <name type="scientific">Parafrankia sp. (strain EAN1pec)</name>
    <dbReference type="NCBI Taxonomy" id="298653"/>
    <lineage>
        <taxon>Bacteria</taxon>
        <taxon>Bacillati</taxon>
        <taxon>Actinomycetota</taxon>
        <taxon>Actinomycetes</taxon>
        <taxon>Frankiales</taxon>
        <taxon>Frankiaceae</taxon>
        <taxon>Parafrankia</taxon>
    </lineage>
</organism>
<keyword id="KW-0687">Ribonucleoprotein</keyword>
<keyword id="KW-0689">Ribosomal protein</keyword>
<gene>
    <name evidence="1" type="primary">rpmF</name>
    <name type="ordered locus">Franean1_1137</name>
</gene>
<protein>
    <recommendedName>
        <fullName evidence="1">Large ribosomal subunit protein bL32</fullName>
    </recommendedName>
    <alternativeName>
        <fullName evidence="3">50S ribosomal protein L32</fullName>
    </alternativeName>
</protein>